<comment type="function">
    <text evidence="1">The glycine cleavage system catalyzes the degradation of glycine. The P protein binds the alpha-amino group of glycine through its pyridoxal phosphate cofactor; CO(2) is released and the remaining methylamine moiety is then transferred to the lipoamide cofactor of the H protein.</text>
</comment>
<comment type="catalytic activity">
    <reaction evidence="1">
        <text>N(6)-[(R)-lipoyl]-L-lysyl-[glycine-cleavage complex H protein] + glycine + H(+) = N(6)-[(R)-S(8)-aminomethyldihydrolipoyl]-L-lysyl-[glycine-cleavage complex H protein] + CO2</text>
        <dbReference type="Rhea" id="RHEA:24304"/>
        <dbReference type="Rhea" id="RHEA-COMP:10494"/>
        <dbReference type="Rhea" id="RHEA-COMP:10495"/>
        <dbReference type="ChEBI" id="CHEBI:15378"/>
        <dbReference type="ChEBI" id="CHEBI:16526"/>
        <dbReference type="ChEBI" id="CHEBI:57305"/>
        <dbReference type="ChEBI" id="CHEBI:83099"/>
        <dbReference type="ChEBI" id="CHEBI:83143"/>
        <dbReference type="EC" id="1.4.4.2"/>
    </reaction>
</comment>
<comment type="cofactor">
    <cofactor evidence="1">
        <name>pyridoxal 5'-phosphate</name>
        <dbReference type="ChEBI" id="CHEBI:597326"/>
    </cofactor>
</comment>
<comment type="subunit">
    <text evidence="1">The glycine cleavage system is composed of four proteins: P, T, L and H. In this organism, the P 'protein' is a heterodimer of two subunits.</text>
</comment>
<comment type="similarity">
    <text evidence="1">Belongs to the GcvP family. C-terminal subunit subfamily.</text>
</comment>
<accession>C3NHN7</accession>
<evidence type="ECO:0000255" key="1">
    <source>
        <dbReference type="HAMAP-Rule" id="MF_00713"/>
    </source>
</evidence>
<sequence>MVWRQAKWDEPLIFELNNSGANRQGLLINKDDEIRSEIKEMKIPKNLLRENGPNLPSLSELEVVRHFIRLSQMNFGVDVGIMPLGSCTMKYNPKIEEKATAITESHHPLEDEDHVQGILEMIYELQNWFSEITGMDECSLQVPAGSAGEFAGVLMIKKYHEDHNRNYKDTMLVADTAHGTNPASAAMAGYKVMYVKSNGEGLVDMDILREIVNDKTAGFMLTNPNTLGLFEENILEISKIIHSANAILYYDGANLNGVLGIARPGDMGFDIVHLNLHKTFAVPHGGGGPGAGAICAKGELVNYLPYPMVEKVNGKYRLSKIPKNSVGKIATFYGNVGNLARSFAYLLGLGPQGVQMVGKMSTLATNYLIAKLRDIKELELIAPNRHRKHEVVFSVKQLMENYGVSANDVAKALLDSGFYAPTIYFPPIIEEALMIEPTETESKETLDMFAEALKKIVEDAKRNPEQLLKSPSNTSIARLDQAYANHPSTITPTYRVLKLRRMGKINYLK</sequence>
<name>GCSPB_SACI1</name>
<protein>
    <recommendedName>
        <fullName evidence="1">Probable glycine dehydrogenase (decarboxylating) subunit 2</fullName>
        <ecNumber evidence="1">1.4.4.2</ecNumber>
    </recommendedName>
    <alternativeName>
        <fullName evidence="1">Glycine cleavage system P-protein subunit 2</fullName>
    </alternativeName>
    <alternativeName>
        <fullName evidence="1">Glycine decarboxylase subunit 2</fullName>
    </alternativeName>
    <alternativeName>
        <fullName evidence="1">Glycine dehydrogenase (aminomethyl-transferring) subunit 2</fullName>
    </alternativeName>
</protein>
<keyword id="KW-0560">Oxidoreductase</keyword>
<keyword id="KW-0663">Pyridoxal phosphate</keyword>
<dbReference type="EC" id="1.4.4.2" evidence="1"/>
<dbReference type="EMBL" id="CP001404">
    <property type="protein sequence ID" value="ACP48647.1"/>
    <property type="molecule type" value="Genomic_DNA"/>
</dbReference>
<dbReference type="RefSeq" id="WP_012711310.1">
    <property type="nucleotide sequence ID" value="NC_012623.1"/>
</dbReference>
<dbReference type="SMR" id="C3NHN7"/>
<dbReference type="GeneID" id="84061617"/>
<dbReference type="KEGG" id="sin:YN1551_1559"/>
<dbReference type="HOGENOM" id="CLU_004620_5_0_2"/>
<dbReference type="Proteomes" id="UP000006818">
    <property type="component" value="Chromosome"/>
</dbReference>
<dbReference type="GO" id="GO:0005829">
    <property type="term" value="C:cytosol"/>
    <property type="evidence" value="ECO:0007669"/>
    <property type="project" value="TreeGrafter"/>
</dbReference>
<dbReference type="GO" id="GO:0005960">
    <property type="term" value="C:glycine cleavage complex"/>
    <property type="evidence" value="ECO:0007669"/>
    <property type="project" value="TreeGrafter"/>
</dbReference>
<dbReference type="GO" id="GO:0016594">
    <property type="term" value="F:glycine binding"/>
    <property type="evidence" value="ECO:0007669"/>
    <property type="project" value="TreeGrafter"/>
</dbReference>
<dbReference type="GO" id="GO:0004375">
    <property type="term" value="F:glycine dehydrogenase (decarboxylating) activity"/>
    <property type="evidence" value="ECO:0007669"/>
    <property type="project" value="UniProtKB-EC"/>
</dbReference>
<dbReference type="GO" id="GO:0030170">
    <property type="term" value="F:pyridoxal phosphate binding"/>
    <property type="evidence" value="ECO:0007669"/>
    <property type="project" value="TreeGrafter"/>
</dbReference>
<dbReference type="GO" id="GO:0019464">
    <property type="term" value="P:glycine decarboxylation via glycine cleavage system"/>
    <property type="evidence" value="ECO:0007669"/>
    <property type="project" value="UniProtKB-UniRule"/>
</dbReference>
<dbReference type="CDD" id="cd00613">
    <property type="entry name" value="GDC-P"/>
    <property type="match status" value="1"/>
</dbReference>
<dbReference type="FunFam" id="3.40.640.10:FF:000224">
    <property type="entry name" value="Probable glycine dehydrogenase (decarboxylating) subunit 2"/>
    <property type="match status" value="1"/>
</dbReference>
<dbReference type="FunFam" id="3.90.1150.10:FF:000014">
    <property type="entry name" value="Probable glycine dehydrogenase (decarboxylating) subunit 2"/>
    <property type="match status" value="1"/>
</dbReference>
<dbReference type="Gene3D" id="6.20.440.10">
    <property type="match status" value="1"/>
</dbReference>
<dbReference type="Gene3D" id="3.90.1150.10">
    <property type="entry name" value="Aspartate Aminotransferase, domain 1"/>
    <property type="match status" value="1"/>
</dbReference>
<dbReference type="Gene3D" id="3.40.640.10">
    <property type="entry name" value="Type I PLP-dependent aspartate aminotransferase-like (Major domain)"/>
    <property type="match status" value="1"/>
</dbReference>
<dbReference type="HAMAP" id="MF_00713">
    <property type="entry name" value="GcvPB"/>
    <property type="match status" value="1"/>
</dbReference>
<dbReference type="InterPro" id="IPR023012">
    <property type="entry name" value="GcvPB"/>
</dbReference>
<dbReference type="InterPro" id="IPR049316">
    <property type="entry name" value="GDC-P_C"/>
</dbReference>
<dbReference type="InterPro" id="IPR049315">
    <property type="entry name" value="GDC-P_N"/>
</dbReference>
<dbReference type="InterPro" id="IPR020581">
    <property type="entry name" value="GDC_P"/>
</dbReference>
<dbReference type="InterPro" id="IPR015424">
    <property type="entry name" value="PyrdxlP-dep_Trfase"/>
</dbReference>
<dbReference type="InterPro" id="IPR015421">
    <property type="entry name" value="PyrdxlP-dep_Trfase_major"/>
</dbReference>
<dbReference type="InterPro" id="IPR015422">
    <property type="entry name" value="PyrdxlP-dep_Trfase_small"/>
</dbReference>
<dbReference type="NCBIfam" id="NF003346">
    <property type="entry name" value="PRK04366.1"/>
    <property type="match status" value="1"/>
</dbReference>
<dbReference type="PANTHER" id="PTHR11773:SF1">
    <property type="entry name" value="GLYCINE DEHYDROGENASE (DECARBOXYLATING), MITOCHONDRIAL"/>
    <property type="match status" value="1"/>
</dbReference>
<dbReference type="PANTHER" id="PTHR11773">
    <property type="entry name" value="GLYCINE DEHYDROGENASE, DECARBOXYLATING"/>
    <property type="match status" value="1"/>
</dbReference>
<dbReference type="Pfam" id="PF21478">
    <property type="entry name" value="GcvP2_C"/>
    <property type="match status" value="1"/>
</dbReference>
<dbReference type="Pfam" id="PF02347">
    <property type="entry name" value="GDC-P"/>
    <property type="match status" value="1"/>
</dbReference>
<dbReference type="SUPFAM" id="SSF53383">
    <property type="entry name" value="PLP-dependent transferases"/>
    <property type="match status" value="1"/>
</dbReference>
<reference key="1">
    <citation type="journal article" date="2009" name="Proc. Natl. Acad. Sci. U.S.A.">
        <title>Biogeography of the Sulfolobus islandicus pan-genome.</title>
        <authorList>
            <person name="Reno M.L."/>
            <person name="Held N.L."/>
            <person name="Fields C.J."/>
            <person name="Burke P.V."/>
            <person name="Whitaker R.J."/>
        </authorList>
    </citation>
    <scope>NUCLEOTIDE SEQUENCE [LARGE SCALE GENOMIC DNA]</scope>
    <source>
        <strain>Y.N.15.51 / Yellowstone #2</strain>
    </source>
</reference>
<gene>
    <name evidence="1" type="primary">gcvPB</name>
    <name type="ordered locus">YN1551_1559</name>
</gene>
<proteinExistence type="inferred from homology"/>
<feature type="chain" id="PRO_1000212677" description="Probable glycine dehydrogenase (decarboxylating) subunit 2">
    <location>
        <begin position="1"/>
        <end position="509"/>
    </location>
</feature>
<feature type="modified residue" description="N6-(pyridoxal phosphate)lysine" evidence="1">
    <location>
        <position position="278"/>
    </location>
</feature>
<organism>
    <name type="scientific">Saccharolobus islandicus (strain Y.N.15.51 / Yellowstone #2)</name>
    <name type="common">Sulfolobus islandicus</name>
    <dbReference type="NCBI Taxonomy" id="419942"/>
    <lineage>
        <taxon>Archaea</taxon>
        <taxon>Thermoproteota</taxon>
        <taxon>Thermoprotei</taxon>
        <taxon>Sulfolobales</taxon>
        <taxon>Sulfolobaceae</taxon>
        <taxon>Saccharolobus</taxon>
    </lineage>
</organism>